<reference key="1">
    <citation type="submission" date="2006-08" db="EMBL/GenBank/DDBJ databases">
        <title>Complete sequence of Alkalilimnicola ehrilichei MLHE-1.</title>
        <authorList>
            <person name="Copeland A."/>
            <person name="Lucas S."/>
            <person name="Lapidus A."/>
            <person name="Barry K."/>
            <person name="Detter J.C."/>
            <person name="Glavina del Rio T."/>
            <person name="Hammon N."/>
            <person name="Israni S."/>
            <person name="Dalin E."/>
            <person name="Tice H."/>
            <person name="Pitluck S."/>
            <person name="Sims D."/>
            <person name="Brettin T."/>
            <person name="Bruce D."/>
            <person name="Han C."/>
            <person name="Tapia R."/>
            <person name="Gilna P."/>
            <person name="Schmutz J."/>
            <person name="Larimer F."/>
            <person name="Land M."/>
            <person name="Hauser L."/>
            <person name="Kyrpides N."/>
            <person name="Mikhailova N."/>
            <person name="Oremland R.S."/>
            <person name="Hoeft S.E."/>
            <person name="Switzer-Blum J."/>
            <person name="Kulp T."/>
            <person name="King G."/>
            <person name="Tabita R."/>
            <person name="Witte B."/>
            <person name="Santini J.M."/>
            <person name="Basu P."/>
            <person name="Hollibaugh J.T."/>
            <person name="Xie G."/>
            <person name="Stolz J.F."/>
            <person name="Richardson P."/>
        </authorList>
    </citation>
    <scope>NUCLEOTIDE SEQUENCE [LARGE SCALE GENOMIC DNA]</scope>
    <source>
        <strain>ATCC BAA-1101 / DSM 17681 / MLHE-1</strain>
    </source>
</reference>
<dbReference type="EC" id="4.1.1.19" evidence="1"/>
<dbReference type="EMBL" id="CP000453">
    <property type="protein sequence ID" value="ABI55429.1"/>
    <property type="molecule type" value="Genomic_DNA"/>
</dbReference>
<dbReference type="RefSeq" id="WP_011627825.1">
    <property type="nucleotide sequence ID" value="NC_008340.1"/>
</dbReference>
<dbReference type="SMR" id="Q0ACK8"/>
<dbReference type="KEGG" id="aeh:Mlg_0072"/>
<dbReference type="eggNOG" id="COG1166">
    <property type="taxonomic scope" value="Bacteria"/>
</dbReference>
<dbReference type="HOGENOM" id="CLU_027243_1_0_6"/>
<dbReference type="OrthoDB" id="9802658at2"/>
<dbReference type="UniPathway" id="UPA00186">
    <property type="reaction ID" value="UER00284"/>
</dbReference>
<dbReference type="Proteomes" id="UP000001962">
    <property type="component" value="Chromosome"/>
</dbReference>
<dbReference type="GO" id="GO:0008792">
    <property type="term" value="F:arginine decarboxylase activity"/>
    <property type="evidence" value="ECO:0007669"/>
    <property type="project" value="UniProtKB-UniRule"/>
</dbReference>
<dbReference type="GO" id="GO:0046872">
    <property type="term" value="F:metal ion binding"/>
    <property type="evidence" value="ECO:0007669"/>
    <property type="project" value="UniProtKB-KW"/>
</dbReference>
<dbReference type="GO" id="GO:0006527">
    <property type="term" value="P:arginine catabolic process"/>
    <property type="evidence" value="ECO:0007669"/>
    <property type="project" value="InterPro"/>
</dbReference>
<dbReference type="GO" id="GO:0033388">
    <property type="term" value="P:putrescine biosynthetic process from arginine"/>
    <property type="evidence" value="ECO:0007669"/>
    <property type="project" value="TreeGrafter"/>
</dbReference>
<dbReference type="GO" id="GO:0008295">
    <property type="term" value="P:spermidine biosynthetic process"/>
    <property type="evidence" value="ECO:0007669"/>
    <property type="project" value="UniProtKB-UniRule"/>
</dbReference>
<dbReference type="CDD" id="cd06830">
    <property type="entry name" value="PLPDE_III_ADC"/>
    <property type="match status" value="1"/>
</dbReference>
<dbReference type="FunFam" id="3.20.20.10:FF:000001">
    <property type="entry name" value="Biosynthetic arginine decarboxylase"/>
    <property type="match status" value="1"/>
</dbReference>
<dbReference type="Gene3D" id="1.10.287.3440">
    <property type="match status" value="1"/>
</dbReference>
<dbReference type="Gene3D" id="1.20.58.930">
    <property type="match status" value="1"/>
</dbReference>
<dbReference type="Gene3D" id="3.20.20.10">
    <property type="entry name" value="Alanine racemase"/>
    <property type="match status" value="1"/>
</dbReference>
<dbReference type="Gene3D" id="2.40.37.10">
    <property type="entry name" value="Lyase, Ornithine Decarboxylase, Chain A, domain 1"/>
    <property type="match status" value="1"/>
</dbReference>
<dbReference type="HAMAP" id="MF_01417">
    <property type="entry name" value="SpeA"/>
    <property type="match status" value="1"/>
</dbReference>
<dbReference type="InterPro" id="IPR009006">
    <property type="entry name" value="Ala_racemase/Decarboxylase_C"/>
</dbReference>
<dbReference type="InterPro" id="IPR040634">
    <property type="entry name" value="Arg_decarb_HB"/>
</dbReference>
<dbReference type="InterPro" id="IPR041128">
    <property type="entry name" value="Arg_decarbox_C"/>
</dbReference>
<dbReference type="InterPro" id="IPR002985">
    <property type="entry name" value="Arg_decrbxlase"/>
</dbReference>
<dbReference type="InterPro" id="IPR022657">
    <property type="entry name" value="De-COase2_CS"/>
</dbReference>
<dbReference type="InterPro" id="IPR022644">
    <property type="entry name" value="De-COase2_N"/>
</dbReference>
<dbReference type="InterPro" id="IPR022653">
    <property type="entry name" value="De-COase2_pyr-phos_BS"/>
</dbReference>
<dbReference type="InterPro" id="IPR000183">
    <property type="entry name" value="Orn/DAP/Arg_de-COase"/>
</dbReference>
<dbReference type="InterPro" id="IPR029066">
    <property type="entry name" value="PLP-binding_barrel"/>
</dbReference>
<dbReference type="NCBIfam" id="NF003763">
    <property type="entry name" value="PRK05354.1"/>
    <property type="match status" value="1"/>
</dbReference>
<dbReference type="NCBIfam" id="TIGR01273">
    <property type="entry name" value="speA"/>
    <property type="match status" value="1"/>
</dbReference>
<dbReference type="PANTHER" id="PTHR43295">
    <property type="entry name" value="ARGININE DECARBOXYLASE"/>
    <property type="match status" value="1"/>
</dbReference>
<dbReference type="PANTHER" id="PTHR43295:SF9">
    <property type="entry name" value="BIOSYNTHETIC ARGININE DECARBOXYLASE"/>
    <property type="match status" value="1"/>
</dbReference>
<dbReference type="Pfam" id="PF17810">
    <property type="entry name" value="Arg_decarb_HB"/>
    <property type="match status" value="1"/>
</dbReference>
<dbReference type="Pfam" id="PF17944">
    <property type="entry name" value="Arg_decarbox_C"/>
    <property type="match status" value="1"/>
</dbReference>
<dbReference type="Pfam" id="PF02784">
    <property type="entry name" value="Orn_Arg_deC_N"/>
    <property type="match status" value="1"/>
</dbReference>
<dbReference type="PIRSF" id="PIRSF001336">
    <property type="entry name" value="Arg_decrbxlase"/>
    <property type="match status" value="1"/>
</dbReference>
<dbReference type="PRINTS" id="PR01180">
    <property type="entry name" value="ARGDCRBXLASE"/>
</dbReference>
<dbReference type="PRINTS" id="PR01179">
    <property type="entry name" value="ODADCRBXLASE"/>
</dbReference>
<dbReference type="SUPFAM" id="SSF50621">
    <property type="entry name" value="Alanine racemase C-terminal domain-like"/>
    <property type="match status" value="1"/>
</dbReference>
<dbReference type="SUPFAM" id="SSF51419">
    <property type="entry name" value="PLP-binding barrel"/>
    <property type="match status" value="1"/>
</dbReference>
<dbReference type="PROSITE" id="PS00878">
    <property type="entry name" value="ODR_DC_2_1"/>
    <property type="match status" value="1"/>
</dbReference>
<dbReference type="PROSITE" id="PS00879">
    <property type="entry name" value="ODR_DC_2_2"/>
    <property type="match status" value="1"/>
</dbReference>
<protein>
    <recommendedName>
        <fullName evidence="1">Biosynthetic arginine decarboxylase</fullName>
        <shortName evidence="1">ADC</shortName>
        <ecNumber evidence="1">4.1.1.19</ecNumber>
    </recommendedName>
</protein>
<keyword id="KW-0210">Decarboxylase</keyword>
<keyword id="KW-0456">Lyase</keyword>
<keyword id="KW-0460">Magnesium</keyword>
<keyword id="KW-0479">Metal-binding</keyword>
<keyword id="KW-0620">Polyamine biosynthesis</keyword>
<keyword id="KW-0663">Pyridoxal phosphate</keyword>
<keyword id="KW-1185">Reference proteome</keyword>
<keyword id="KW-0745">Spermidine biosynthesis</keyword>
<evidence type="ECO:0000255" key="1">
    <source>
        <dbReference type="HAMAP-Rule" id="MF_01417"/>
    </source>
</evidence>
<accession>Q0ACK8</accession>
<organism>
    <name type="scientific">Alkalilimnicola ehrlichii (strain ATCC BAA-1101 / DSM 17681 / MLHE-1)</name>
    <dbReference type="NCBI Taxonomy" id="187272"/>
    <lineage>
        <taxon>Bacteria</taxon>
        <taxon>Pseudomonadati</taxon>
        <taxon>Pseudomonadota</taxon>
        <taxon>Gammaproteobacteria</taxon>
        <taxon>Chromatiales</taxon>
        <taxon>Ectothiorhodospiraceae</taxon>
        <taxon>Alkalilimnicola</taxon>
    </lineage>
</organism>
<gene>
    <name evidence="1" type="primary">speA</name>
    <name type="ordered locus">Mlg_0072</name>
</gene>
<name>SPEA_ALKEH</name>
<proteinExistence type="inferred from homology"/>
<comment type="function">
    <text evidence="1">Catalyzes the biosynthesis of agmatine from arginine.</text>
</comment>
<comment type="catalytic activity">
    <reaction evidence="1">
        <text>L-arginine + H(+) = agmatine + CO2</text>
        <dbReference type="Rhea" id="RHEA:17641"/>
        <dbReference type="ChEBI" id="CHEBI:15378"/>
        <dbReference type="ChEBI" id="CHEBI:16526"/>
        <dbReference type="ChEBI" id="CHEBI:32682"/>
        <dbReference type="ChEBI" id="CHEBI:58145"/>
        <dbReference type="EC" id="4.1.1.19"/>
    </reaction>
</comment>
<comment type="cofactor">
    <cofactor evidence="1">
        <name>Mg(2+)</name>
        <dbReference type="ChEBI" id="CHEBI:18420"/>
    </cofactor>
</comment>
<comment type="cofactor">
    <cofactor evidence="1">
        <name>pyridoxal 5'-phosphate</name>
        <dbReference type="ChEBI" id="CHEBI:597326"/>
    </cofactor>
</comment>
<comment type="pathway">
    <text evidence="1">Amine and polyamine biosynthesis; agmatine biosynthesis; agmatine from L-arginine: step 1/1.</text>
</comment>
<comment type="similarity">
    <text evidence="1">Belongs to the Orn/Lys/Arg decarboxylase class-II family. SpeA subfamily.</text>
</comment>
<feature type="chain" id="PRO_1000024253" description="Biosynthetic arginine decarboxylase">
    <location>
        <begin position="1"/>
        <end position="628"/>
    </location>
</feature>
<feature type="binding site" evidence="1">
    <location>
        <begin position="281"/>
        <end position="291"/>
    </location>
    <ligand>
        <name>substrate</name>
    </ligand>
</feature>
<feature type="modified residue" description="N6-(pyridoxal phosphate)lysine" evidence="1">
    <location>
        <position position="101"/>
    </location>
</feature>
<sequence length="628" mass="69264">MSDWSIGLARQVWSVQHWSGGYFDISDEGRVVARPDRDPARAPLDLAGIAAEARHQGLGLPVLVRFLDILHDRVDSLCQAFRQAMVEDGYRGGYRAVYPIKVNQQRRVVEEIIRHGNGRVGLEAGSKPELMAVLALTPPGGTVVCNGYKDREYVRLALRGRQLGLQVHLVIEKASELELVLEEAAALGVTPSLGMRVRLATIGAGKWQNTGGEKSKFGLTAAQALAVVDRLRAAGCLDWLRLLHFHLGSQIPNIRDIRRGMREAARYYAELRALGAPVETVDVGGGLGVDYEGSRSRSFCSMNYTVAEYAHNVVHALWQVCEDEGLPHPDIITESGRAMTAHHAVLITDVIDGDRVPGGADLLAPADAAPRVLHELWTVWTGLDRRHPLEAYHDAAHGLAEAQELYAHGVLNLTDRARAERIWQAVCHALLQRLDPRRRPHRELLDELNEKLADKLFCNFSLFQSMPDVWAIDQIFPVLPLQRLDEPPASRAVLQDLTCDSDGCIRGYVDRDGVESTLPLPPWRPGEPYLLGIFLVGAYQEILGDMHNLFGDTHSVNVRLTGEGYALSGAAHGDTITDVLRYVDFDAEVLRGIYRERVVAAAGLDATARAQCLADLEAGLRGYTYLDT</sequence>